<name>SCAPE_HUMAN</name>
<dbReference type="EMBL" id="AF242528">
    <property type="protein sequence ID" value="AAK29205.1"/>
    <property type="status" value="ALT_INIT"/>
    <property type="molecule type" value="mRNA"/>
</dbReference>
<dbReference type="EMBL" id="AB040887">
    <property type="protein sequence ID" value="BAA95978.1"/>
    <property type="status" value="ALT_SEQ"/>
    <property type="molecule type" value="mRNA"/>
</dbReference>
<dbReference type="EMBL" id="AL137612">
    <property type="protein sequence ID" value="CAB70841.1"/>
    <property type="molecule type" value="mRNA"/>
</dbReference>
<dbReference type="EMBL" id="BX647285">
    <property type="status" value="NOT_ANNOTATED_CDS"/>
    <property type="molecule type" value="mRNA"/>
</dbReference>
<dbReference type="EMBL" id="AC015798">
    <property type="status" value="NOT_ANNOTATED_CDS"/>
    <property type="molecule type" value="Genomic_DNA"/>
</dbReference>
<dbReference type="EMBL" id="AC016343">
    <property type="status" value="NOT_ANNOTATED_CDS"/>
    <property type="molecule type" value="Genomic_DNA"/>
</dbReference>
<dbReference type="EMBL" id="AC027243">
    <property type="status" value="NOT_ANNOTATED_CDS"/>
    <property type="molecule type" value="Genomic_DNA"/>
</dbReference>
<dbReference type="EMBL" id="AC051643">
    <property type="status" value="NOT_ANNOTATED_CDS"/>
    <property type="molecule type" value="Genomic_DNA"/>
</dbReference>
<dbReference type="EMBL" id="AC090179">
    <property type="status" value="NOT_ANNOTATED_CDS"/>
    <property type="molecule type" value="Genomic_DNA"/>
</dbReference>
<dbReference type="EMBL" id="AC090751">
    <property type="status" value="NOT_ANNOTATED_CDS"/>
    <property type="molecule type" value="Genomic_DNA"/>
</dbReference>
<dbReference type="EMBL" id="CH471136">
    <property type="protein sequence ID" value="EAW99218.1"/>
    <property type="molecule type" value="Genomic_DNA"/>
</dbReference>
<dbReference type="EMBL" id="BC015212">
    <property type="protein sequence ID" value="AAH15212.1"/>
    <property type="status" value="ALT_INIT"/>
    <property type="molecule type" value="mRNA"/>
</dbReference>
<dbReference type="EMBL" id="BC107415">
    <property type="protein sequence ID" value="AAI07416.1"/>
    <property type="status" value="ALT_SEQ"/>
    <property type="molecule type" value="mRNA"/>
</dbReference>
<dbReference type="EMBL" id="AF119814">
    <property type="protein sequence ID" value="AAG47945.1"/>
    <property type="status" value="ALT_INIT"/>
    <property type="molecule type" value="mRNA"/>
</dbReference>
<dbReference type="EMBL" id="BT006762">
    <property type="protein sequence ID" value="AAP35408.1"/>
    <property type="molecule type" value="mRNA"/>
</dbReference>
<dbReference type="CCDS" id="CCDS53961.1">
    <molecule id="Q9BY12-3"/>
</dbReference>
<dbReference type="CCDS" id="CCDS53962.1">
    <molecule id="Q9BY12-1"/>
</dbReference>
<dbReference type="PIR" id="T46314">
    <property type="entry name" value="T46314"/>
</dbReference>
<dbReference type="RefSeq" id="NP_001139395.1">
    <molecule id="Q9BY12-3"/>
    <property type="nucleotide sequence ID" value="NM_001145923.2"/>
</dbReference>
<dbReference type="RefSeq" id="NP_065894.2">
    <molecule id="Q9BY12-1"/>
    <property type="nucleotide sequence ID" value="NM_020843.4"/>
</dbReference>
<dbReference type="RefSeq" id="XP_005254476.1">
    <property type="nucleotide sequence ID" value="XM_005254419.2"/>
</dbReference>
<dbReference type="RefSeq" id="XP_016877758.1">
    <property type="nucleotide sequence ID" value="XM_017022269.1"/>
</dbReference>
<dbReference type="RefSeq" id="XP_016877759.1">
    <property type="nucleotide sequence ID" value="XM_017022270.1"/>
</dbReference>
<dbReference type="PDB" id="8BPO">
    <property type="method" value="EM"/>
    <property type="resolution" value="2.80 A"/>
    <property type="chains" value="s2=1-1400"/>
</dbReference>
<dbReference type="PDBsum" id="8BPO"/>
<dbReference type="EMDB" id="EMD-16155"/>
<dbReference type="SMR" id="Q9BY12"/>
<dbReference type="BioGRID" id="119067">
    <property type="interactions" value="34"/>
</dbReference>
<dbReference type="FunCoup" id="Q9BY12">
    <property type="interactions" value="2738"/>
</dbReference>
<dbReference type="IntAct" id="Q9BY12">
    <property type="interactions" value="38"/>
</dbReference>
<dbReference type="MINT" id="Q9BY12"/>
<dbReference type="STRING" id="9606.ENSP00000454973"/>
<dbReference type="GlyGen" id="Q9BY12">
    <property type="glycosylation" value="4 sites, 3 N-linked glycans (3 sites), 1 O-linked glycan (1 site)"/>
</dbReference>
<dbReference type="iPTMnet" id="Q9BY12"/>
<dbReference type="PhosphoSitePlus" id="Q9BY12"/>
<dbReference type="BioMuta" id="SCAPER"/>
<dbReference type="DMDM" id="510120715"/>
<dbReference type="jPOST" id="Q9BY12"/>
<dbReference type="MassIVE" id="Q9BY12"/>
<dbReference type="PaxDb" id="9606-ENSP00000454973"/>
<dbReference type="PeptideAtlas" id="Q9BY12"/>
<dbReference type="ProteomicsDB" id="27620"/>
<dbReference type="ProteomicsDB" id="41275"/>
<dbReference type="ProteomicsDB" id="79561">
    <molecule id="Q9BY12-1"/>
</dbReference>
<dbReference type="Pumba" id="Q9BY12"/>
<dbReference type="Antibodypedia" id="27436">
    <property type="antibodies" value="64 antibodies from 16 providers"/>
</dbReference>
<dbReference type="DNASU" id="49855"/>
<dbReference type="Ensembl" id="ENST00000324767.11">
    <molecule id="Q9BY12-1"/>
    <property type="protein sequence ID" value="ENSP00000326924.7"/>
    <property type="gene ID" value="ENSG00000140386.13"/>
</dbReference>
<dbReference type="Ensembl" id="ENST00000538941.6">
    <molecule id="Q9BY12-3"/>
    <property type="protein sequence ID" value="ENSP00000442190.2"/>
    <property type="gene ID" value="ENSG00000140386.13"/>
</dbReference>
<dbReference type="Ensembl" id="ENST00000563290.6">
    <molecule id="Q9BY12-1"/>
    <property type="protein sequence ID" value="ENSP00000454973.1"/>
    <property type="gene ID" value="ENSG00000140386.13"/>
</dbReference>
<dbReference type="GeneID" id="49855"/>
<dbReference type="KEGG" id="hsa:49855"/>
<dbReference type="MANE-Select" id="ENST00000563290.6">
    <property type="protein sequence ID" value="ENSP00000454973.1"/>
    <property type="RefSeq nucleotide sequence ID" value="NM_020843.4"/>
    <property type="RefSeq protein sequence ID" value="NP_065894.2"/>
</dbReference>
<dbReference type="UCSC" id="uc002bbx.4">
    <molecule id="Q9BY12-1"/>
    <property type="organism name" value="human"/>
</dbReference>
<dbReference type="AGR" id="HGNC:13081"/>
<dbReference type="CTD" id="49855"/>
<dbReference type="DisGeNET" id="49855"/>
<dbReference type="GeneCards" id="SCAPER"/>
<dbReference type="HGNC" id="HGNC:13081">
    <property type="gene designation" value="SCAPER"/>
</dbReference>
<dbReference type="HPA" id="ENSG00000140386">
    <property type="expression patterns" value="Tissue enhanced (retina)"/>
</dbReference>
<dbReference type="MalaCards" id="SCAPER"/>
<dbReference type="MIM" id="611611">
    <property type="type" value="gene"/>
</dbReference>
<dbReference type="MIM" id="618195">
    <property type="type" value="phenotype"/>
</dbReference>
<dbReference type="neXtProt" id="NX_Q9BY12"/>
<dbReference type="OpenTargets" id="ENSG00000140386"/>
<dbReference type="Orphanet" id="110">
    <property type="disease" value="Bardet-Biedl syndrome"/>
</dbReference>
<dbReference type="Orphanet" id="791">
    <property type="disease" value="Retinitis pigmentosa"/>
</dbReference>
<dbReference type="PharmGKB" id="PA162402512"/>
<dbReference type="VEuPathDB" id="HostDB:ENSG00000140386"/>
<dbReference type="eggNOG" id="KOG4722">
    <property type="taxonomic scope" value="Eukaryota"/>
</dbReference>
<dbReference type="GeneTree" id="ENSGT00390000011159"/>
<dbReference type="HOGENOM" id="CLU_005178_0_0_1"/>
<dbReference type="InParanoid" id="Q9BY12"/>
<dbReference type="OMA" id="QSWVGGF"/>
<dbReference type="OrthoDB" id="71500at2759"/>
<dbReference type="PAN-GO" id="Q9BY12">
    <property type="GO annotations" value="0 GO annotations based on evolutionary models"/>
</dbReference>
<dbReference type="PhylomeDB" id="Q9BY12"/>
<dbReference type="TreeFam" id="TF324831"/>
<dbReference type="PathwayCommons" id="Q9BY12"/>
<dbReference type="SignaLink" id="Q9BY12"/>
<dbReference type="BioGRID-ORCS" id="49855">
    <property type="hits" value="16 hits in 1154 CRISPR screens"/>
</dbReference>
<dbReference type="CD-CODE" id="232F8A39">
    <property type="entry name" value="P-body"/>
</dbReference>
<dbReference type="CD-CODE" id="DEE660B4">
    <property type="entry name" value="Stress granule"/>
</dbReference>
<dbReference type="ChiTaRS" id="SCAPER">
    <property type="organism name" value="human"/>
</dbReference>
<dbReference type="GenomeRNAi" id="49855"/>
<dbReference type="Pharos" id="Q9BY12">
    <property type="development level" value="Tbio"/>
</dbReference>
<dbReference type="PRO" id="PR:Q9BY12"/>
<dbReference type="Proteomes" id="UP000005640">
    <property type="component" value="Chromosome 15"/>
</dbReference>
<dbReference type="RNAct" id="Q9BY12">
    <property type="molecule type" value="protein"/>
</dbReference>
<dbReference type="Bgee" id="ENSG00000140386">
    <property type="expression patterns" value="Expressed in cortical plate and 191 other cell types or tissues"/>
</dbReference>
<dbReference type="ExpressionAtlas" id="Q9BY12">
    <property type="expression patterns" value="baseline and differential"/>
</dbReference>
<dbReference type="GO" id="GO:0005829">
    <property type="term" value="C:cytosol"/>
    <property type="evidence" value="ECO:0000314"/>
    <property type="project" value="HPA"/>
</dbReference>
<dbReference type="GO" id="GO:0005783">
    <property type="term" value="C:endoplasmic reticulum"/>
    <property type="evidence" value="ECO:0007669"/>
    <property type="project" value="UniProtKB-SubCell"/>
</dbReference>
<dbReference type="GO" id="GO:0016607">
    <property type="term" value="C:nuclear speck"/>
    <property type="evidence" value="ECO:0000314"/>
    <property type="project" value="HPA"/>
</dbReference>
<dbReference type="GO" id="GO:0005654">
    <property type="term" value="C:nucleoplasm"/>
    <property type="evidence" value="ECO:0000314"/>
    <property type="project" value="HPA"/>
</dbReference>
<dbReference type="GO" id="GO:1990917">
    <property type="term" value="C:ooplasm"/>
    <property type="evidence" value="ECO:0007669"/>
    <property type="project" value="Ensembl"/>
</dbReference>
<dbReference type="GO" id="GO:0061827">
    <property type="term" value="C:sperm head"/>
    <property type="evidence" value="ECO:0007669"/>
    <property type="project" value="Ensembl"/>
</dbReference>
<dbReference type="GO" id="GO:0003676">
    <property type="term" value="F:nucleic acid binding"/>
    <property type="evidence" value="ECO:0007669"/>
    <property type="project" value="InterPro"/>
</dbReference>
<dbReference type="GO" id="GO:0008270">
    <property type="term" value="F:zinc ion binding"/>
    <property type="evidence" value="ECO:0007669"/>
    <property type="project" value="UniProtKB-KW"/>
</dbReference>
<dbReference type="GO" id="GO:0001547">
    <property type="term" value="P:antral ovarian follicle growth"/>
    <property type="evidence" value="ECO:0007669"/>
    <property type="project" value="Ensembl"/>
</dbReference>
<dbReference type="GO" id="GO:0060041">
    <property type="term" value="P:retina development in camera-type eye"/>
    <property type="evidence" value="ECO:0000315"/>
    <property type="project" value="MGI"/>
</dbReference>
<dbReference type="GO" id="GO:0072520">
    <property type="term" value="P:seminiferous tubule development"/>
    <property type="evidence" value="ECO:0007669"/>
    <property type="project" value="Ensembl"/>
</dbReference>
<dbReference type="GO" id="GO:0007283">
    <property type="term" value="P:spermatogenesis"/>
    <property type="evidence" value="ECO:0007669"/>
    <property type="project" value="Ensembl"/>
</dbReference>
<dbReference type="FunFam" id="3.30.160.60:FF:000680">
    <property type="entry name" value="S phase cyclin A-associated protein in the endoplasmic reticulum"/>
    <property type="match status" value="1"/>
</dbReference>
<dbReference type="Gene3D" id="3.30.160.60">
    <property type="entry name" value="Classic Zinc Finger"/>
    <property type="match status" value="1"/>
</dbReference>
<dbReference type="InterPro" id="IPR003604">
    <property type="entry name" value="Matrin/U1-like-C_Znf_C2H2"/>
</dbReference>
<dbReference type="InterPro" id="IPR032446">
    <property type="entry name" value="SCAPER_N"/>
</dbReference>
<dbReference type="InterPro" id="IPR036236">
    <property type="entry name" value="Znf_C2H2_sf"/>
</dbReference>
<dbReference type="InterPro" id="IPR013087">
    <property type="entry name" value="Znf_C2H2_type"/>
</dbReference>
<dbReference type="PANTHER" id="PTHR31434">
    <property type="entry name" value="S PHASE CYCLIN A-ASSOCIATED PROTEIN IN THE ENDOPLASMIC RETICULUM"/>
    <property type="match status" value="1"/>
</dbReference>
<dbReference type="PANTHER" id="PTHR31434:SF2">
    <property type="entry name" value="S PHASE CYCLIN A-ASSOCIATED PROTEIN IN THE ENDOPLASMIC RETICULUM"/>
    <property type="match status" value="1"/>
</dbReference>
<dbReference type="Pfam" id="PF16501">
    <property type="entry name" value="SCAPER_N"/>
    <property type="match status" value="1"/>
</dbReference>
<dbReference type="Pfam" id="PF12874">
    <property type="entry name" value="zf-met"/>
    <property type="match status" value="1"/>
</dbReference>
<dbReference type="SMART" id="SM00451">
    <property type="entry name" value="ZnF_U1"/>
    <property type="match status" value="1"/>
</dbReference>
<dbReference type="SUPFAM" id="SSF57667">
    <property type="entry name" value="beta-beta-alpha zinc fingers"/>
    <property type="match status" value="1"/>
</dbReference>
<dbReference type="PROSITE" id="PS00028">
    <property type="entry name" value="ZINC_FINGER_C2H2_1"/>
    <property type="match status" value="1"/>
</dbReference>
<gene>
    <name evidence="8" type="primary">SCAPER</name>
    <name type="synonym">KIAA1454</name>
    <name type="synonym">ZNF291</name>
    <name type="ORF">MSTP063</name>
</gene>
<keyword id="KW-0002">3D-structure</keyword>
<keyword id="KW-0025">Alternative splicing</keyword>
<keyword id="KW-0225">Disease variant</keyword>
<keyword id="KW-0256">Endoplasmic reticulum</keyword>
<keyword id="KW-0991">Intellectual disability</keyword>
<keyword id="KW-0479">Metal-binding</keyword>
<keyword id="KW-0539">Nucleus</keyword>
<keyword id="KW-0597">Phosphoprotein</keyword>
<keyword id="KW-1267">Proteomics identification</keyword>
<keyword id="KW-1185">Reference proteome</keyword>
<keyword id="KW-0682">Retinitis pigmentosa</keyword>
<keyword id="KW-0862">Zinc</keyword>
<keyword id="KW-0863">Zinc-finger</keyword>
<feature type="chain" id="PRO_0000047513" description="S phase cyclin A-associated protein in the endoplasmic reticulum">
    <location>
        <begin position="1"/>
        <end position="1400"/>
    </location>
</feature>
<feature type="zinc finger region" description="C2H2-type">
    <location>
        <begin position="792"/>
        <end position="816"/>
    </location>
</feature>
<feature type="region of interest" description="Disordered" evidence="1">
    <location>
        <begin position="36"/>
        <end position="61"/>
    </location>
</feature>
<feature type="region of interest" description="Disordered" evidence="1">
    <location>
        <begin position="226"/>
        <end position="277"/>
    </location>
</feature>
<feature type="region of interest" description="Disordered" evidence="1">
    <location>
        <begin position="517"/>
        <end position="550"/>
    </location>
</feature>
<feature type="region of interest" description="Disordered" evidence="1">
    <location>
        <begin position="701"/>
        <end position="723"/>
    </location>
</feature>
<feature type="compositionally biased region" description="Polar residues" evidence="1">
    <location>
        <begin position="231"/>
        <end position="243"/>
    </location>
</feature>
<feature type="compositionally biased region" description="Basic and acidic residues" evidence="1">
    <location>
        <begin position="539"/>
        <end position="550"/>
    </location>
</feature>
<feature type="modified residue" description="Phosphoserine" evidence="9">
    <location>
        <position position="832"/>
    </location>
</feature>
<feature type="splice variant" id="VSP_046503" description="In isoform 3." evidence="6">
    <original>MMASFQRSNSHDKVRRIVAEEGRTARNLIAWSVPLESKDDDGKPKCQTGGKSKRTIQGTHKTTKQSTAVDCKITSSTTGDKHFDKSPTKTRHPRKIDLRARYWAFLFDNLRRAVDEIYVTCESDQSVVECKEVLMMLDNYVRDFKALIDWIQLQEKLEKTDAQSRPTSLAWEVKKMSPGRHVIPSPSTDRINVTSNARRSLNFGGSTGTVPAPRLAPTGVSWADKVKAHHTGSTASSEITPAQSCPPMTVQKASRKN</original>
    <variation>MKTKYIFCNIT</variation>
    <location>
        <begin position="1"/>
        <end position="257"/>
    </location>
</feature>
<feature type="sequence variant" id="VAR_081681" description="In IDDRP; uncertain significance." evidence="4">
    <location>
        <position position="620"/>
    </location>
</feature>
<feature type="sequence variant" id="VAR_019978" description="In dbSNP:rs1607017." evidence="2 5">
    <original>P</original>
    <variation>T</variation>
    <location>
        <position position="1089"/>
    </location>
</feature>
<feature type="sequence variant" id="VAR_059910" description="In dbSNP:rs3743176.">
    <original>A</original>
    <variation>T</variation>
    <location>
        <position position="1139"/>
    </location>
</feature>
<feature type="sequence variant" id="VAR_052806" description="In dbSNP:rs3743176.">
    <original>A</original>
    <variation>T</variation>
    <location>
        <position position="1140"/>
    </location>
</feature>
<feature type="sequence variant" id="VAR_081682" description="In IDDRP; uncertain significance; dbSNP:rs1305542291." evidence="4">
    <original>S</original>
    <variation>N</variation>
    <location>
        <position position="1219"/>
    </location>
</feature>
<feature type="mutagenesis site" description="No effect on CCNA2/CDK2 complex-binding." evidence="3">
    <original>RNL</original>
    <variation>AAA</variation>
    <location>
        <begin position="26"/>
        <end position="28"/>
    </location>
</feature>
<feature type="mutagenesis site" description="Loss of CCNA2/CDK2 complex-binding." evidence="3">
    <original>RSL</original>
    <variation>AAA</variation>
    <location>
        <begin position="199"/>
        <end position="201"/>
    </location>
</feature>
<feature type="mutagenesis site" description="No effect on CCNA2/CDK2 complex-binding." evidence="3">
    <original>RAL</original>
    <variation>AAA</variation>
    <location>
        <begin position="678"/>
        <end position="680"/>
    </location>
</feature>
<feature type="sequence conflict" description="In Ref. 1; AAK29205." evidence="7" ref="1">
    <original>M</original>
    <variation>V</variation>
    <location>
        <position position="1"/>
    </location>
</feature>
<feature type="sequence conflict" description="In Ref. 7; AAG47945." evidence="7" ref="7">
    <original>S</original>
    <variation>F</variation>
    <location>
        <position position="1262"/>
    </location>
</feature>
<sequence>MMASFQRSNSHDKVRRIVAEEGRTARNLIAWSVPLESKDDDGKPKCQTGGKSKRTIQGTHKTTKQSTAVDCKITSSTTGDKHFDKSPTKTRHPRKIDLRARYWAFLFDNLRRAVDEIYVTCESDQSVVECKEVLMMLDNYVRDFKALIDWIQLQEKLEKTDAQSRPTSLAWEVKKMSPGRHVIPSPSTDRINVTSNARRSLNFGGSTGTVPAPRLAPTGVSWADKVKAHHTGSTASSEITPAQSCPPMTVQKASRKNERKDAEGWETVQRGRPIRSRSTAVMPKVSLATEATRSKDDSDKENVCLLPDESIQKGQFVGDGTSNTIESHPKDSLHSCDHPLAEKTQFTVSTLDDVKNSGSIRDNYVRTSEISAVHIDTECVSVMLQAGTPPLQVNEEKFPAEKARIENEMDPSDISNSMAEVLAKKEELADRLEKANEEAIASAIAEEEQLTREIEAEENNDINIETDNDSDFSASMGSGSVSFCGMSMDWNDVLADYEARESWRQNTSWGDIVEEEPARPPGHGIHMHEKLSSPSRKRTIAESKKKHEEKQMKAQQLREKLREEKTLKLQKLLEREKDVRKWKEELLDQRRRMMEEKLLHAEFKREVQLQAIVKKAQEEEAKVNEIAFINTLEAQNKRHDVLSKLKEYEQRLNELQEERQRRQEEKQARDEAVQERKRALEAERQARVEELLMKRKEQEARIEQQRQEKEKAREDAARERARDREERLAALTAAQQEAMEELQKKIQLKHDESIRRHMEQIEQRKEKAAELSSGRHANTDYAPKLTPYERKKQCSLCNVLISSEVYLFSHVKGRKHQQAVRENTSIQGRELSDEEVEHLSLKKYIIDIVVESTAPAEALKDGEERQKNKKKAKKIKARMNFRAKEYESLMETKNSGSDSPYKAKLQRLAKDLLKQVQVQDSGSWANNKVSALDRTLGEITRILEKENVADQIAFQAAGGLTALEHILQAVVPATNVNTVLRIPPKSLCNAINVYNLTCNNCSENCSDVLFSNKITFLMDLLIHQLTVYVPDENNTILGRNTNKQVFEGLTTGLLKVSAVVLGCLIANRPDGNCQPATPKIPTQEMKNKPSQGDPFNNRVQDLISYVVNMGLIDKLCACFLSVQGPVDENPKMAIFLQHAAGLLHAMCTLCFAVTGRSYSIFDNNRQDPTGLTAALQATDLAGVLHMLYCVLFHGTILDPSTASPKENYTQNTIQVAIQSLRFFNSFAALHLPAFQSIVGAEGLSLAFRHMASSLLGHCSQVSCESLLHEVIVCVGYFTVNHPDNQVIVQSGRHPTVLQKLCQLPFQYFSDPRLIKVLFPSLIAACYNNHQNKIILEQEMSCVLLATFIQDLAQTPGQAENQPYQPKGKCLGSQDYLELANRFPQQAWEEARQFFLKKEKK</sequence>
<evidence type="ECO:0000256" key="1">
    <source>
        <dbReference type="SAM" id="MobiDB-lite"/>
    </source>
</evidence>
<evidence type="ECO:0000269" key="2">
    <source>
    </source>
</evidence>
<evidence type="ECO:0000269" key="3">
    <source>
    </source>
</evidence>
<evidence type="ECO:0000269" key="4">
    <source>
    </source>
</evidence>
<evidence type="ECO:0000269" key="5">
    <source ref="7"/>
</evidence>
<evidence type="ECO:0000303" key="6">
    <source>
    </source>
</evidence>
<evidence type="ECO:0000305" key="7"/>
<evidence type="ECO:0000312" key="8">
    <source>
        <dbReference type="HGNC" id="HGNC:13081"/>
    </source>
</evidence>
<evidence type="ECO:0007744" key="9">
    <source>
    </source>
</evidence>
<organism>
    <name type="scientific">Homo sapiens</name>
    <name type="common">Human</name>
    <dbReference type="NCBI Taxonomy" id="9606"/>
    <lineage>
        <taxon>Eukaryota</taxon>
        <taxon>Metazoa</taxon>
        <taxon>Chordata</taxon>
        <taxon>Craniata</taxon>
        <taxon>Vertebrata</taxon>
        <taxon>Euteleostomi</taxon>
        <taxon>Mammalia</taxon>
        <taxon>Eutheria</taxon>
        <taxon>Euarchontoglires</taxon>
        <taxon>Primates</taxon>
        <taxon>Haplorrhini</taxon>
        <taxon>Catarrhini</taxon>
        <taxon>Hominidae</taxon>
        <taxon>Homo</taxon>
    </lineage>
</organism>
<proteinExistence type="evidence at protein level"/>
<reference key="1">
    <citation type="submission" date="2000-03" db="EMBL/GenBank/DDBJ databases">
        <title>Identification and characterization of ZNF291, a novel protein on chromosome 15q24.</title>
        <authorList>
            <person name="Carim-Todd L."/>
            <person name="Sumoy L."/>
            <person name="Estivill X."/>
            <person name="Escarceller M."/>
        </authorList>
    </citation>
    <scope>NUCLEOTIDE SEQUENCE [MRNA] (ISOFORM 1)</scope>
</reference>
<reference key="2">
    <citation type="journal article" date="2000" name="DNA Res.">
        <title>Prediction of the coding sequences of unidentified human genes. XVII. The complete sequences of 100 new cDNA clones from brain which code for large proteins in vitro.</title>
        <authorList>
            <person name="Nagase T."/>
            <person name="Kikuno R."/>
            <person name="Ishikawa K."/>
            <person name="Hirosawa M."/>
            <person name="Ohara O."/>
        </authorList>
    </citation>
    <scope>NUCLEOTIDE SEQUENCE [LARGE SCALE MRNA]</scope>
    <scope>VARIANT THR-1089</scope>
    <source>
        <tissue>Brain</tissue>
    </source>
</reference>
<reference key="3">
    <citation type="journal article" date="2007" name="BMC Genomics">
        <title>The full-ORF clone resource of the German cDNA consortium.</title>
        <authorList>
            <person name="Bechtel S."/>
            <person name="Rosenfelder H."/>
            <person name="Duda A."/>
            <person name="Schmidt C.P."/>
            <person name="Ernst U."/>
            <person name="Wellenreuther R."/>
            <person name="Mehrle A."/>
            <person name="Schuster C."/>
            <person name="Bahr A."/>
            <person name="Bloecker H."/>
            <person name="Heubner D."/>
            <person name="Hoerlein A."/>
            <person name="Michel G."/>
            <person name="Wedler H."/>
            <person name="Koehrer K."/>
            <person name="Ottenwaelder B."/>
            <person name="Poustka A."/>
            <person name="Wiemann S."/>
            <person name="Schupp I."/>
        </authorList>
    </citation>
    <scope>NUCLEOTIDE SEQUENCE [LARGE SCALE MRNA] (ISOFORM 3)</scope>
    <scope>NUCLEOTIDE SEQUENCE [LARGE SCALE MRNA] OF 1135-1400 (ISOFORM 1)</scope>
    <source>
        <tissue>Retina</tissue>
        <tissue>Testis</tissue>
    </source>
</reference>
<reference key="4">
    <citation type="journal article" date="2006" name="Nature">
        <title>Analysis of the DNA sequence and duplication history of human chromosome 15.</title>
        <authorList>
            <person name="Zody M.C."/>
            <person name="Garber M."/>
            <person name="Sharpe T."/>
            <person name="Young S.K."/>
            <person name="Rowen L."/>
            <person name="O'Neill K."/>
            <person name="Whittaker C.A."/>
            <person name="Kamal M."/>
            <person name="Chang J.L."/>
            <person name="Cuomo C.A."/>
            <person name="Dewar K."/>
            <person name="FitzGerald M.G."/>
            <person name="Kodira C.D."/>
            <person name="Madan A."/>
            <person name="Qin S."/>
            <person name="Yang X."/>
            <person name="Abbasi N."/>
            <person name="Abouelleil A."/>
            <person name="Arachchi H.M."/>
            <person name="Baradarani L."/>
            <person name="Birditt B."/>
            <person name="Bloom S."/>
            <person name="Bloom T."/>
            <person name="Borowsky M.L."/>
            <person name="Burke J."/>
            <person name="Butler J."/>
            <person name="Cook A."/>
            <person name="DeArellano K."/>
            <person name="DeCaprio D."/>
            <person name="Dorris L. III"/>
            <person name="Dors M."/>
            <person name="Eichler E.E."/>
            <person name="Engels R."/>
            <person name="Fahey J."/>
            <person name="Fleetwood P."/>
            <person name="Friedman C."/>
            <person name="Gearin G."/>
            <person name="Hall J.L."/>
            <person name="Hensley G."/>
            <person name="Johnson E."/>
            <person name="Jones C."/>
            <person name="Kamat A."/>
            <person name="Kaur A."/>
            <person name="Locke D.P."/>
            <person name="Madan A."/>
            <person name="Munson G."/>
            <person name="Jaffe D.B."/>
            <person name="Lui A."/>
            <person name="Macdonald P."/>
            <person name="Mauceli E."/>
            <person name="Naylor J.W."/>
            <person name="Nesbitt R."/>
            <person name="Nicol R."/>
            <person name="O'Leary S.B."/>
            <person name="Ratcliffe A."/>
            <person name="Rounsley S."/>
            <person name="She X."/>
            <person name="Sneddon K.M.B."/>
            <person name="Stewart S."/>
            <person name="Sougnez C."/>
            <person name="Stone S.M."/>
            <person name="Topham K."/>
            <person name="Vincent D."/>
            <person name="Wang S."/>
            <person name="Zimmer A.R."/>
            <person name="Birren B.W."/>
            <person name="Hood L."/>
            <person name="Lander E.S."/>
            <person name="Nusbaum C."/>
        </authorList>
    </citation>
    <scope>NUCLEOTIDE SEQUENCE [LARGE SCALE GENOMIC DNA]</scope>
</reference>
<reference key="5">
    <citation type="submission" date="2005-09" db="EMBL/GenBank/DDBJ databases">
        <authorList>
            <person name="Mural R.J."/>
            <person name="Istrail S."/>
            <person name="Sutton G.G."/>
            <person name="Florea L."/>
            <person name="Halpern A.L."/>
            <person name="Mobarry C.M."/>
            <person name="Lippert R."/>
            <person name="Walenz B."/>
            <person name="Shatkay H."/>
            <person name="Dew I."/>
            <person name="Miller J.R."/>
            <person name="Flanigan M.J."/>
            <person name="Edwards N.J."/>
            <person name="Bolanos R."/>
            <person name="Fasulo D."/>
            <person name="Halldorsson B.V."/>
            <person name="Hannenhalli S."/>
            <person name="Turner R."/>
            <person name="Yooseph S."/>
            <person name="Lu F."/>
            <person name="Nusskern D.R."/>
            <person name="Shue B.C."/>
            <person name="Zheng X.H."/>
            <person name="Zhong F."/>
            <person name="Delcher A.L."/>
            <person name="Huson D.H."/>
            <person name="Kravitz S.A."/>
            <person name="Mouchard L."/>
            <person name="Reinert K."/>
            <person name="Remington K.A."/>
            <person name="Clark A.G."/>
            <person name="Waterman M.S."/>
            <person name="Eichler E.E."/>
            <person name="Adams M.D."/>
            <person name="Hunkapiller M.W."/>
            <person name="Myers E.W."/>
            <person name="Venter J.C."/>
        </authorList>
    </citation>
    <scope>NUCLEOTIDE SEQUENCE [LARGE SCALE GENOMIC DNA]</scope>
</reference>
<reference key="6">
    <citation type="journal article" date="2004" name="Genome Res.">
        <title>The status, quality, and expansion of the NIH full-length cDNA project: the Mammalian Gene Collection (MGC).</title>
        <authorList>
            <consortium name="The MGC Project Team"/>
        </authorList>
    </citation>
    <scope>NUCLEOTIDE SEQUENCE [LARGE SCALE MRNA] OF 1-551 AND 1024-1340 (ISOFORM 1)</scope>
    <source>
        <tissue>Colon</tissue>
        <tissue>Prostate</tissue>
    </source>
</reference>
<reference key="7">
    <citation type="submission" date="1999-01" db="EMBL/GenBank/DDBJ databases">
        <authorList>
            <person name="Zhao B."/>
            <person name="Xu Y.Y."/>
            <person name="Liu Y.Q."/>
            <person name="Wang X.Y."/>
            <person name="Lui B."/>
            <person name="Ye J."/>
            <person name="Song L."/>
            <person name="Zhao Y."/>
            <person name="Cao H.Q."/>
            <person name="Zhao X.W."/>
            <person name="Gao Y."/>
            <person name="Zhang C.L."/>
            <person name="Zhang J."/>
            <person name="Liu L.S."/>
            <person name="Ding J.F."/>
            <person name="Gao R.L."/>
            <person name="Wu Q.Y."/>
            <person name="Qiang B.Q."/>
            <person name="Yuan J.G."/>
            <person name="Liew C.C."/>
            <person name="Zhao M.S."/>
            <person name="Hui R.T."/>
        </authorList>
    </citation>
    <scope>NUCLEOTIDE SEQUENCE [LARGE SCALE MRNA] OF 246-1340 (ISOFORM 1)</scope>
    <scope>VARIANT THR-1089</scope>
    <source>
        <tissue>Heart</tissue>
    </source>
</reference>
<reference key="8">
    <citation type="submission" date="2003-05" db="EMBL/GenBank/DDBJ databases">
        <title>Cloning of human full-length CDSs in BD Creator(TM) system donor vector.</title>
        <authorList>
            <person name="Kalnine N."/>
            <person name="Chen X."/>
            <person name="Rolfs A."/>
            <person name="Halleck A."/>
            <person name="Hines L."/>
            <person name="Eisenstein S."/>
            <person name="Koundinya M."/>
            <person name="Raphael J."/>
            <person name="Moreira D."/>
            <person name="Kelley T."/>
            <person name="LaBaer J."/>
            <person name="Lin Y."/>
            <person name="Phelan M."/>
            <person name="Farmer A."/>
        </authorList>
    </citation>
    <scope>NUCLEOTIDE SEQUENCE [LARGE SCALE MRNA] OF 1109-1400 (ISOFORM 1)</scope>
</reference>
<reference key="9">
    <citation type="journal article" date="2007" name="J. Cell Biol.">
        <title>SCAPER, a novel cyclin A-interacting protein that regulates cell cycle progression.</title>
        <authorList>
            <person name="Tsang W.Y."/>
            <person name="Wang L."/>
            <person name="Chen Z."/>
            <person name="Sanchez I."/>
            <person name="Dynlacht B.D."/>
        </authorList>
    </citation>
    <scope>FUNCTION</scope>
    <scope>INTERACTION WITH CCNA2/CDK2 COMPLEX</scope>
    <scope>SUBCELLULAR LOCATION</scope>
    <scope>TISSUE SPECIFICITY</scope>
    <scope>DEVELOPMENTAL STAGE</scope>
    <scope>MUTAGENESIS OF 26-ARG--LEU-28; 199-ARG--LEU-201 AND 678-ARG--LEU-680</scope>
</reference>
<reference key="10">
    <citation type="journal article" date="2013" name="J. Proteome Res.">
        <title>Toward a comprehensive characterization of a human cancer cell phosphoproteome.</title>
        <authorList>
            <person name="Zhou H."/>
            <person name="Di Palma S."/>
            <person name="Preisinger C."/>
            <person name="Peng M."/>
            <person name="Polat A.N."/>
            <person name="Heck A.J."/>
            <person name="Mohammed S."/>
        </authorList>
    </citation>
    <scope>PHOSPHORYLATION [LARGE SCALE ANALYSIS] AT SER-832</scope>
    <scope>IDENTIFICATION BY MASS SPECTROMETRY [LARGE SCALE ANALYSIS]</scope>
    <source>
        <tissue>Cervix carcinoma</tissue>
    </source>
</reference>
<reference key="11">
    <citation type="journal article" date="2017" name="J. Med. Genet.">
        <title>Mutations in SCAPER cause autosomal recessive retinitis pigmentosa with intellectual disability.</title>
        <authorList>
            <person name="Tatour Y."/>
            <person name="Sanchez-Navarro I."/>
            <person name="Chervinsky E."/>
            <person name="Hakonarson H."/>
            <person name="Gawi H."/>
            <person name="Tahsin-Swafiri S."/>
            <person name="Leibu R."/>
            <person name="Lopez-Molina M.I."/>
            <person name="Fernandez-Sanz G."/>
            <person name="Ayuso C."/>
            <person name="Ben-Yosef T."/>
        </authorList>
    </citation>
    <scope>INVOLVEMENT IN IDDRP</scope>
    <scope>TISSUE SPECIFICITY</scope>
    <scope>VARIANTS IDDRP GLU-620 DEL AND ASN-1219</scope>
</reference>
<comment type="function">
    <text evidence="3">CCNA2/CDK2 regulatory protein that transiently maintains CCNA2 in the cytoplasm.</text>
</comment>
<comment type="subunit">
    <text evidence="3">Interacts with CCNA2/CDK2 complex, but not with CCNA2/CDC2, CCNB1/CDC2 or CCNE1/CDK2 complexes, at multiple phases of the cell cycle, including S and G2/M.</text>
</comment>
<comment type="interaction">
    <interactant intactId="EBI-308519">
        <id>Q9BY12</id>
    </interactant>
    <interactant intactId="EBI-375096">
        <id>P24941</id>
        <label>CDK2</label>
    </interactant>
    <organismsDiffer>false</organismsDiffer>
    <experiments>3</experiments>
</comment>
<comment type="interaction">
    <interactant intactId="EBI-25837959">
        <id>Q9BY12-3</id>
    </interactant>
    <interactant intactId="EBI-11282723">
        <id>Q9Y5Z0</id>
        <label>BACE2</label>
    </interactant>
    <organismsDiffer>false</organismsDiffer>
    <experiments>3</experiments>
</comment>
<comment type="interaction">
    <interactant intactId="EBI-25837959">
        <id>Q9BY12-3</id>
    </interactant>
    <interactant intactId="EBI-10988864">
        <id>P46379-2</id>
        <label>BAG6</label>
    </interactant>
    <organismsDiffer>false</organismsDiffer>
    <experiments>3</experiments>
</comment>
<comment type="interaction">
    <interactant intactId="EBI-25837959">
        <id>Q9BY12-3</id>
    </interactant>
    <interactant intactId="EBI-25837549">
        <id>P28329-3</id>
        <label>CHAT</label>
    </interactant>
    <organismsDiffer>false</organismsDiffer>
    <experiments>3</experiments>
</comment>
<comment type="interaction">
    <interactant intactId="EBI-25837959">
        <id>Q9BY12-3</id>
    </interactant>
    <interactant intactId="EBI-6875961">
        <id>P02489</id>
        <label>CRYAA</label>
    </interactant>
    <organismsDiffer>false</organismsDiffer>
    <experiments>3</experiments>
</comment>
<comment type="interaction">
    <interactant intactId="EBI-25837959">
        <id>Q9BY12-3</id>
    </interactant>
    <interactant intactId="EBI-12593112">
        <id>O75190-2</id>
        <label>DNAJB6</label>
    </interactant>
    <organismsDiffer>false</organismsDiffer>
    <experiments>3</experiments>
</comment>
<comment type="interaction">
    <interactant intactId="EBI-25837959">
        <id>Q9BY12-3</id>
    </interactant>
    <interactant intactId="EBI-10968534">
        <id>P50570-2</id>
        <label>DNM2</label>
    </interactant>
    <organismsDiffer>false</organismsDiffer>
    <experiments>3</experiments>
</comment>
<comment type="interaction">
    <interactant intactId="EBI-25837959">
        <id>Q9BY12-3</id>
    </interactant>
    <interactant intactId="EBI-356015">
        <id>Q14204</id>
        <label>DYNC1H1</label>
    </interactant>
    <organismsDiffer>false</organismsDiffer>
    <experiments>3</experiments>
</comment>
<comment type="interaction">
    <interactant intactId="EBI-25837959">
        <id>Q9BY12-3</id>
    </interactant>
    <interactant intactId="EBI-348399">
        <id>P22607</id>
        <label>FGFR3</label>
    </interactant>
    <organismsDiffer>false</organismsDiffer>
    <experiments>3</experiments>
</comment>
<comment type="interaction">
    <interactant intactId="EBI-25837959">
        <id>Q9BY12-3</id>
    </interactant>
    <interactant intactId="EBI-11110431">
        <id>Q8TB36</id>
        <label>GDAP1</label>
    </interactant>
    <organismsDiffer>false</organismsDiffer>
    <experiments>3</experiments>
</comment>
<comment type="interaction">
    <interactant intactId="EBI-25837959">
        <id>Q9BY12-3</id>
    </interactant>
    <interactant intactId="EBI-744302">
        <id>P14136</id>
        <label>GFAP</label>
    </interactant>
    <organismsDiffer>false</organismsDiffer>
    <experiments>3</experiments>
</comment>
<comment type="interaction">
    <interactant intactId="EBI-25837959">
        <id>Q9BY12-3</id>
    </interactant>
    <interactant intactId="EBI-25913156">
        <id>O14908-2</id>
        <label>GIPC1</label>
    </interactant>
    <organismsDiffer>false</organismsDiffer>
    <experiments>3</experiments>
</comment>
<comment type="interaction">
    <interactant intactId="EBI-25837959">
        <id>Q9BY12-3</id>
    </interactant>
    <interactant intactId="EBI-350145">
        <id>P01112</id>
        <label>HRAS</label>
    </interactant>
    <organismsDiffer>false</organismsDiffer>
    <experiments>3</experiments>
</comment>
<comment type="interaction">
    <interactant intactId="EBI-25837959">
        <id>Q9BY12-3</id>
    </interactant>
    <interactant intactId="EBI-466029">
        <id>P42858</id>
        <label>HTT</label>
    </interactant>
    <organismsDiffer>false</organismsDiffer>
    <experiments>6</experiments>
</comment>
<comment type="interaction">
    <interactant intactId="EBI-25837959">
        <id>Q9BY12-3</id>
    </interactant>
    <interactant intactId="EBI-948266">
        <id>O14901</id>
        <label>KLF11</label>
    </interactant>
    <organismsDiffer>false</organismsDiffer>
    <experiments>3</experiments>
</comment>
<comment type="interaction">
    <interactant intactId="EBI-25837959">
        <id>Q9BY12-3</id>
    </interactant>
    <interactant intactId="EBI-2432309">
        <id>Q92876</id>
        <label>KLK6</label>
    </interactant>
    <organismsDiffer>false</organismsDiffer>
    <experiments>3</experiments>
</comment>
<comment type="interaction">
    <interactant intactId="EBI-25837959">
        <id>Q9BY12-3</id>
    </interactant>
    <interactant intactId="EBI-1014472">
        <id>P35240</id>
        <label>NF2</label>
    </interactant>
    <organismsDiffer>false</organismsDiffer>
    <experiments>3</experiments>
</comment>
<comment type="interaction">
    <interactant intactId="EBI-25837959">
        <id>Q9BY12-3</id>
    </interactant>
    <interactant intactId="EBI-2811583">
        <id>Q9BVL2</id>
        <label>NUP58</label>
    </interactant>
    <organismsDiffer>false</organismsDiffer>
    <experiments>3</experiments>
</comment>
<comment type="interaction">
    <interactant intactId="EBI-25837959">
        <id>Q9BY12-3</id>
    </interactant>
    <interactant intactId="EBI-5235340">
        <id>Q7Z699</id>
        <label>SPRED1</label>
    </interactant>
    <organismsDiffer>false</organismsDiffer>
    <experiments>3</experiments>
</comment>
<comment type="interaction">
    <interactant intactId="EBI-25837959">
        <id>Q9BY12-3</id>
    </interactant>
    <interactant intactId="EBI-25847109">
        <id>O14656-2</id>
        <label>TOR1A</label>
    </interactant>
    <organismsDiffer>false</organismsDiffer>
    <experiments>3</experiments>
</comment>
<comment type="subcellular location">
    <subcellularLocation>
        <location evidence="3">Endoplasmic reticulum</location>
    </subcellularLocation>
    <subcellularLocation>
        <location evidence="3">Nucleus</location>
    </subcellularLocation>
    <text>Predominantly located in the endoplasmic reticulum, only a small portion is detected in the nucleus.</text>
</comment>
<comment type="alternative products">
    <event type="alternative splicing"/>
    <isoform>
        <id>Q9BY12-1</id>
        <name>1</name>
        <sequence type="displayed"/>
    </isoform>
    <isoform>
        <id>Q9BY12-3</id>
        <name>3</name>
        <sequence type="described" ref="VSP_046503"/>
    </isoform>
</comment>
<comment type="tissue specificity">
    <text evidence="3 4">Widely expressed with high expression in testis. Isoform 1 is detected in various tissues, including retina, fetal and adult brain. Isoform 2 is expressed in the retina at high levels, and in the brain at very low levels (PubMed:28794130).</text>
</comment>
<comment type="developmental stage">
    <text evidence="3">Expressed at each stage of the cell cycle, including G0, although the expression is somewhat higher in late G1 and S phases.</text>
</comment>
<comment type="PTM">
    <text>Phosphorylated in vitro by the CCNA2/CDK2 complex.</text>
</comment>
<comment type="disease" evidence="4">
    <disease id="DI-05391">
        <name>Intellectual developmental disorder and retinitis pigmentosa</name>
        <acronym>IDDRP</acronym>
        <description>An autosomal recessive disease characterized by mild to moderate intellectual disability, retinitis pigmentosa, and attention deficit-hyperactivity disorder observed in some patients.</description>
        <dbReference type="MIM" id="618195"/>
    </disease>
    <text>The disease may be caused by variants affecting the gene represented in this entry.</text>
</comment>
<comment type="sequence caution" evidence="7">
    <conflict type="erroneous initiation">
        <sequence resource="EMBL-CDS" id="AAG47945"/>
    </conflict>
    <text>Truncated N-terminus.</text>
</comment>
<comment type="sequence caution" evidence="7">
    <conflict type="erroneous initiation">
        <sequence resource="EMBL-CDS" id="AAH15212"/>
    </conflict>
    <text>Truncated N-terminus.</text>
</comment>
<comment type="sequence caution" evidence="7">
    <conflict type="miscellaneous discrepancy">
        <sequence resource="EMBL-CDS" id="AAI07416"/>
    </conflict>
    <text>Contaminating sequence. Potential poly-A sequence.</text>
</comment>
<comment type="sequence caution" evidence="7">
    <conflict type="erroneous initiation">
        <sequence resource="EMBL-CDS" id="AAK29205"/>
    </conflict>
    <text>Truncated N-terminus.</text>
</comment>
<comment type="sequence caution" evidence="7">
    <conflict type="miscellaneous discrepancy">
        <sequence resource="EMBL-CDS" id="BAA95978"/>
    </conflict>
    <text>Probable cloning artifact.</text>
</comment>
<protein>
    <recommendedName>
        <fullName evidence="7">S phase cyclin A-associated protein in the endoplasmic reticulum</fullName>
        <shortName>S phase cyclin A-associated protein in the ER</shortName>
    </recommendedName>
    <alternativeName>
        <fullName>Zinc finger protein 291</fullName>
    </alternativeName>
</protein>
<accession>Q9BY12</accession>
<accession>F5H7X8</accession>
<accession>H3BNR7</accession>
<accession>Q3B7X7</accession>
<accession>Q96BS9</accession>
<accession>Q9H3D8</accession>
<accession>Q9NT03</accession>
<accession>Q9P274</accession>